<proteinExistence type="inferred from homology"/>
<keyword id="KW-0249">Electron transport</keyword>
<keyword id="KW-0349">Heme</keyword>
<keyword id="KW-0408">Iron</keyword>
<keyword id="KW-0472">Membrane</keyword>
<keyword id="KW-0479">Metal-binding</keyword>
<keyword id="KW-0496">Mitochondrion</keyword>
<keyword id="KW-0999">Mitochondrion inner membrane</keyword>
<keyword id="KW-0679">Respiratory chain</keyword>
<keyword id="KW-0812">Transmembrane</keyword>
<keyword id="KW-1133">Transmembrane helix</keyword>
<keyword id="KW-0813">Transport</keyword>
<keyword id="KW-0830">Ubiquinone</keyword>
<geneLocation type="mitochondrion"/>
<gene>
    <name type="primary">MT-CYB</name>
    <name type="synonym">COB</name>
    <name type="synonym">CYTB</name>
    <name type="synonym">MTCYB</name>
</gene>
<name>CYB_LEPLC</name>
<feature type="chain" id="PRO_0000254703" description="Cytochrome b">
    <location>
        <begin position="1"/>
        <end position="379"/>
    </location>
</feature>
<feature type="transmembrane region" description="Helical" evidence="2">
    <location>
        <begin position="33"/>
        <end position="53"/>
    </location>
</feature>
<feature type="transmembrane region" description="Helical" evidence="2">
    <location>
        <begin position="77"/>
        <end position="98"/>
    </location>
</feature>
<feature type="transmembrane region" description="Helical" evidence="2">
    <location>
        <begin position="113"/>
        <end position="133"/>
    </location>
</feature>
<feature type="transmembrane region" description="Helical" evidence="2">
    <location>
        <begin position="178"/>
        <end position="198"/>
    </location>
</feature>
<feature type="transmembrane region" description="Helical" evidence="2">
    <location>
        <begin position="226"/>
        <end position="246"/>
    </location>
</feature>
<feature type="transmembrane region" description="Helical" evidence="2">
    <location>
        <begin position="288"/>
        <end position="308"/>
    </location>
</feature>
<feature type="transmembrane region" description="Helical" evidence="2">
    <location>
        <begin position="320"/>
        <end position="340"/>
    </location>
</feature>
<feature type="transmembrane region" description="Helical" evidence="2">
    <location>
        <begin position="347"/>
        <end position="367"/>
    </location>
</feature>
<feature type="binding site" description="axial binding residue" evidence="2">
    <location>
        <position position="83"/>
    </location>
    <ligand>
        <name>heme b</name>
        <dbReference type="ChEBI" id="CHEBI:60344"/>
        <label>b562</label>
    </ligand>
    <ligandPart>
        <name>Fe</name>
        <dbReference type="ChEBI" id="CHEBI:18248"/>
    </ligandPart>
</feature>
<feature type="binding site" description="axial binding residue" evidence="2">
    <location>
        <position position="97"/>
    </location>
    <ligand>
        <name>heme b</name>
        <dbReference type="ChEBI" id="CHEBI:60344"/>
        <label>b566</label>
    </ligand>
    <ligandPart>
        <name>Fe</name>
        <dbReference type="ChEBI" id="CHEBI:18248"/>
    </ligandPart>
</feature>
<feature type="binding site" description="axial binding residue" evidence="2">
    <location>
        <position position="182"/>
    </location>
    <ligand>
        <name>heme b</name>
        <dbReference type="ChEBI" id="CHEBI:60344"/>
        <label>b562</label>
    </ligand>
    <ligandPart>
        <name>Fe</name>
        <dbReference type="ChEBI" id="CHEBI:18248"/>
    </ligandPart>
</feature>
<feature type="binding site" description="axial binding residue" evidence="2">
    <location>
        <position position="196"/>
    </location>
    <ligand>
        <name>heme b</name>
        <dbReference type="ChEBI" id="CHEBI:60344"/>
        <label>b566</label>
    </ligand>
    <ligandPart>
        <name>Fe</name>
        <dbReference type="ChEBI" id="CHEBI:18248"/>
    </ligandPart>
</feature>
<feature type="binding site" evidence="2">
    <location>
        <position position="201"/>
    </location>
    <ligand>
        <name>a ubiquinone</name>
        <dbReference type="ChEBI" id="CHEBI:16389"/>
    </ligand>
</feature>
<accession>Q20K43</accession>
<reference key="1">
    <citation type="journal article" date="2006" name="BMC Evol. Biol.">
        <title>Molecular phylogeny and taxonomic revision of the sportive lemurs (Lepilemur, Primates).</title>
        <authorList>
            <person name="Andriaholinirina N."/>
            <person name="Fausser J.-L."/>
            <person name="Roos C."/>
            <person name="Zinner D."/>
            <person name="Thalmann U."/>
            <person name="Rabarivola C."/>
            <person name="Ravoarimanana I."/>
            <person name="Ganzhorn J.U."/>
            <person name="Meier B."/>
            <person name="Hilgartner R."/>
            <person name="Walter L."/>
            <person name="Zaramody A."/>
            <person name="Langer C."/>
            <person name="Hahn T."/>
            <person name="Zimmermann E."/>
            <person name="Radespiel U."/>
            <person name="Craul M."/>
            <person name="Tomiuk J."/>
            <person name="Tattersall I."/>
            <person name="Rumpler Y."/>
        </authorList>
    </citation>
    <scope>NUCLEOTIDE SEQUENCE [GENOMIC DNA]</scope>
</reference>
<dbReference type="EMBL" id="DQ109007">
    <property type="protein sequence ID" value="AAZ92437.1"/>
    <property type="molecule type" value="Genomic_DNA"/>
</dbReference>
<dbReference type="SMR" id="Q20K43"/>
<dbReference type="GO" id="GO:0005743">
    <property type="term" value="C:mitochondrial inner membrane"/>
    <property type="evidence" value="ECO:0007669"/>
    <property type="project" value="UniProtKB-SubCell"/>
</dbReference>
<dbReference type="GO" id="GO:0045275">
    <property type="term" value="C:respiratory chain complex III"/>
    <property type="evidence" value="ECO:0007669"/>
    <property type="project" value="InterPro"/>
</dbReference>
<dbReference type="GO" id="GO:0046872">
    <property type="term" value="F:metal ion binding"/>
    <property type="evidence" value="ECO:0007669"/>
    <property type="project" value="UniProtKB-KW"/>
</dbReference>
<dbReference type="GO" id="GO:0008121">
    <property type="term" value="F:ubiquinol-cytochrome-c reductase activity"/>
    <property type="evidence" value="ECO:0007669"/>
    <property type="project" value="InterPro"/>
</dbReference>
<dbReference type="GO" id="GO:0006122">
    <property type="term" value="P:mitochondrial electron transport, ubiquinol to cytochrome c"/>
    <property type="evidence" value="ECO:0007669"/>
    <property type="project" value="TreeGrafter"/>
</dbReference>
<dbReference type="CDD" id="cd00290">
    <property type="entry name" value="cytochrome_b_C"/>
    <property type="match status" value="1"/>
</dbReference>
<dbReference type="CDD" id="cd00284">
    <property type="entry name" value="Cytochrome_b_N"/>
    <property type="match status" value="1"/>
</dbReference>
<dbReference type="FunFam" id="1.20.810.10:FF:000002">
    <property type="entry name" value="Cytochrome b"/>
    <property type="match status" value="1"/>
</dbReference>
<dbReference type="Gene3D" id="1.20.810.10">
    <property type="entry name" value="Cytochrome Bc1 Complex, Chain C"/>
    <property type="match status" value="1"/>
</dbReference>
<dbReference type="InterPro" id="IPR005798">
    <property type="entry name" value="Cyt_b/b6_C"/>
</dbReference>
<dbReference type="InterPro" id="IPR036150">
    <property type="entry name" value="Cyt_b/b6_C_sf"/>
</dbReference>
<dbReference type="InterPro" id="IPR005797">
    <property type="entry name" value="Cyt_b/b6_N"/>
</dbReference>
<dbReference type="InterPro" id="IPR027387">
    <property type="entry name" value="Cytb/b6-like_sf"/>
</dbReference>
<dbReference type="InterPro" id="IPR030689">
    <property type="entry name" value="Cytochrome_b"/>
</dbReference>
<dbReference type="InterPro" id="IPR048260">
    <property type="entry name" value="Cytochrome_b_C_euk/bac"/>
</dbReference>
<dbReference type="InterPro" id="IPR048259">
    <property type="entry name" value="Cytochrome_b_N_euk/bac"/>
</dbReference>
<dbReference type="InterPro" id="IPR016174">
    <property type="entry name" value="Di-haem_cyt_TM"/>
</dbReference>
<dbReference type="PANTHER" id="PTHR19271">
    <property type="entry name" value="CYTOCHROME B"/>
    <property type="match status" value="1"/>
</dbReference>
<dbReference type="PANTHER" id="PTHR19271:SF16">
    <property type="entry name" value="CYTOCHROME B"/>
    <property type="match status" value="1"/>
</dbReference>
<dbReference type="Pfam" id="PF00032">
    <property type="entry name" value="Cytochrom_B_C"/>
    <property type="match status" value="1"/>
</dbReference>
<dbReference type="Pfam" id="PF00033">
    <property type="entry name" value="Cytochrome_B"/>
    <property type="match status" value="1"/>
</dbReference>
<dbReference type="PIRSF" id="PIRSF038885">
    <property type="entry name" value="COB"/>
    <property type="match status" value="1"/>
</dbReference>
<dbReference type="SUPFAM" id="SSF81648">
    <property type="entry name" value="a domain/subunit of cytochrome bc1 complex (Ubiquinol-cytochrome c reductase)"/>
    <property type="match status" value="1"/>
</dbReference>
<dbReference type="SUPFAM" id="SSF81342">
    <property type="entry name" value="Transmembrane di-heme cytochromes"/>
    <property type="match status" value="1"/>
</dbReference>
<dbReference type="PROSITE" id="PS51003">
    <property type="entry name" value="CYTB_CTER"/>
    <property type="match status" value="1"/>
</dbReference>
<dbReference type="PROSITE" id="PS51002">
    <property type="entry name" value="CYTB_NTER"/>
    <property type="match status" value="1"/>
</dbReference>
<sequence>MTNIRKTHPLMKIINSSLIDLPTPPNISSLWNFGSLLGACLAIQIITGLFLAMHYTADTTTAFSSVTHICRDVNYGWAIRYLHANGASTFFLCLFIHVGRGLYYGSFALLETWNIGIMLLLSVMATAFMGYVLPWGQMSFWGATVITNLLSAIPYVGIDLVEWIWGGFSVGKPTLTRFFALHFILPFIISALTMIHLLFLHETGSNNPLGVSSNSDKIPFHPYYTTKDSLGFLLLILLLMTLTLFYPDLLGDPDNYTPANPLNTPPHIKPEWYFLFAYAILRSIPNKLGGVMALILSILILAIIPLLQPIKQQTMMFRPLSQFLFWILVADLLTLTWIGGQPVEDPFINIGQMASILYFSLVIFIMPMICLIENKMLKW</sequence>
<comment type="function">
    <text evidence="2">Component of the ubiquinol-cytochrome c reductase complex (complex III or cytochrome b-c1 complex) that is part of the mitochondrial respiratory chain. The b-c1 complex mediates electron transfer from ubiquinol to cytochrome c. Contributes to the generation of a proton gradient across the mitochondrial membrane that is then used for ATP synthesis.</text>
</comment>
<comment type="cofactor">
    <cofactor evidence="2">
        <name>heme b</name>
        <dbReference type="ChEBI" id="CHEBI:60344"/>
    </cofactor>
    <text evidence="2">Binds 2 heme b groups non-covalently.</text>
</comment>
<comment type="subunit">
    <text evidence="2">The cytochrome bc1 complex contains 11 subunits: 3 respiratory subunits (MT-CYB, CYC1 and UQCRFS1), 2 core proteins (UQCRC1 and UQCRC2) and 6 low-molecular weight proteins (UQCRH/QCR6, UQCRB/QCR7, UQCRQ/QCR8, UQCR10/QCR9, UQCR11/QCR10 and a cleavage product of UQCRFS1). This cytochrome bc1 complex then forms a dimer.</text>
</comment>
<comment type="subcellular location">
    <subcellularLocation>
        <location evidence="2">Mitochondrion inner membrane</location>
        <topology evidence="2">Multi-pass membrane protein</topology>
    </subcellularLocation>
</comment>
<comment type="miscellaneous">
    <text evidence="1">Heme 1 (or BL or b562) is low-potential and absorbs at about 562 nm, and heme 2 (or BH or b566) is high-potential and absorbs at about 566 nm.</text>
</comment>
<comment type="similarity">
    <text evidence="3 4">Belongs to the cytochrome b family.</text>
</comment>
<comment type="caution">
    <text evidence="2">The full-length protein contains only eight transmembrane helices, not nine as predicted by bioinformatics tools.</text>
</comment>
<protein>
    <recommendedName>
        <fullName>Cytochrome b</fullName>
    </recommendedName>
    <alternativeName>
        <fullName>Complex III subunit 3</fullName>
    </alternativeName>
    <alternativeName>
        <fullName>Complex III subunit III</fullName>
    </alternativeName>
    <alternativeName>
        <fullName>Cytochrome b-c1 complex subunit 3</fullName>
    </alternativeName>
    <alternativeName>
        <fullName>Ubiquinol-cytochrome-c reductase complex cytochrome b subunit</fullName>
    </alternativeName>
</protein>
<organism>
    <name type="scientific">Lepilemur leucopus</name>
    <name type="common">White-footed sportive lemur</name>
    <dbReference type="NCBI Taxonomy" id="100475"/>
    <lineage>
        <taxon>Eukaryota</taxon>
        <taxon>Metazoa</taxon>
        <taxon>Chordata</taxon>
        <taxon>Craniata</taxon>
        <taxon>Vertebrata</taxon>
        <taxon>Euteleostomi</taxon>
        <taxon>Mammalia</taxon>
        <taxon>Eutheria</taxon>
        <taxon>Euarchontoglires</taxon>
        <taxon>Primates</taxon>
        <taxon>Strepsirrhini</taxon>
        <taxon>Lemuriformes</taxon>
        <taxon>Lepilemuridae</taxon>
        <taxon>Lepilemur</taxon>
    </lineage>
</organism>
<evidence type="ECO:0000250" key="1"/>
<evidence type="ECO:0000250" key="2">
    <source>
        <dbReference type="UniProtKB" id="P00157"/>
    </source>
</evidence>
<evidence type="ECO:0000255" key="3">
    <source>
        <dbReference type="PROSITE-ProRule" id="PRU00967"/>
    </source>
</evidence>
<evidence type="ECO:0000255" key="4">
    <source>
        <dbReference type="PROSITE-ProRule" id="PRU00968"/>
    </source>
</evidence>